<dbReference type="EC" id="2.4.2.10" evidence="1"/>
<dbReference type="EMBL" id="CP000248">
    <property type="protein sequence ID" value="ABD25357.1"/>
    <property type="molecule type" value="Genomic_DNA"/>
</dbReference>
<dbReference type="RefSeq" id="WP_011444571.1">
    <property type="nucleotide sequence ID" value="NC_007794.1"/>
</dbReference>
<dbReference type="SMR" id="Q2G9W6"/>
<dbReference type="STRING" id="279238.Saro_0912"/>
<dbReference type="KEGG" id="nar:Saro_0912"/>
<dbReference type="eggNOG" id="COG0461">
    <property type="taxonomic scope" value="Bacteria"/>
</dbReference>
<dbReference type="HOGENOM" id="CLU_074878_3_0_5"/>
<dbReference type="UniPathway" id="UPA00070">
    <property type="reaction ID" value="UER00119"/>
</dbReference>
<dbReference type="Proteomes" id="UP000009134">
    <property type="component" value="Chromosome"/>
</dbReference>
<dbReference type="GO" id="GO:0000287">
    <property type="term" value="F:magnesium ion binding"/>
    <property type="evidence" value="ECO:0007669"/>
    <property type="project" value="UniProtKB-UniRule"/>
</dbReference>
<dbReference type="GO" id="GO:0004588">
    <property type="term" value="F:orotate phosphoribosyltransferase activity"/>
    <property type="evidence" value="ECO:0007669"/>
    <property type="project" value="UniProtKB-UniRule"/>
</dbReference>
<dbReference type="GO" id="GO:0044205">
    <property type="term" value="P:'de novo' UMP biosynthetic process"/>
    <property type="evidence" value="ECO:0007669"/>
    <property type="project" value="UniProtKB-UniRule"/>
</dbReference>
<dbReference type="GO" id="GO:0019856">
    <property type="term" value="P:pyrimidine nucleobase biosynthetic process"/>
    <property type="evidence" value="ECO:0007669"/>
    <property type="project" value="InterPro"/>
</dbReference>
<dbReference type="CDD" id="cd06223">
    <property type="entry name" value="PRTases_typeI"/>
    <property type="match status" value="1"/>
</dbReference>
<dbReference type="Gene3D" id="3.40.50.2020">
    <property type="match status" value="1"/>
</dbReference>
<dbReference type="HAMAP" id="MF_01208">
    <property type="entry name" value="PyrE"/>
    <property type="match status" value="1"/>
</dbReference>
<dbReference type="InterPro" id="IPR023031">
    <property type="entry name" value="OPRT"/>
</dbReference>
<dbReference type="InterPro" id="IPR006273">
    <property type="entry name" value="Orotate_PRibTrfase_bac"/>
</dbReference>
<dbReference type="InterPro" id="IPR000836">
    <property type="entry name" value="PRibTrfase_dom"/>
</dbReference>
<dbReference type="InterPro" id="IPR029057">
    <property type="entry name" value="PRTase-like"/>
</dbReference>
<dbReference type="NCBIfam" id="TIGR01367">
    <property type="entry name" value="pyrE_Therm"/>
    <property type="match status" value="1"/>
</dbReference>
<dbReference type="PANTHER" id="PTHR19278">
    <property type="entry name" value="OROTATE PHOSPHORIBOSYLTRANSFERASE"/>
    <property type="match status" value="1"/>
</dbReference>
<dbReference type="PANTHER" id="PTHR19278:SF9">
    <property type="entry name" value="URIDINE 5'-MONOPHOSPHATE SYNTHASE"/>
    <property type="match status" value="1"/>
</dbReference>
<dbReference type="Pfam" id="PF00156">
    <property type="entry name" value="Pribosyltran"/>
    <property type="match status" value="1"/>
</dbReference>
<dbReference type="SUPFAM" id="SSF53271">
    <property type="entry name" value="PRTase-like"/>
    <property type="match status" value="1"/>
</dbReference>
<dbReference type="PROSITE" id="PS00103">
    <property type="entry name" value="PUR_PYR_PR_TRANSFER"/>
    <property type="match status" value="1"/>
</dbReference>
<keyword id="KW-0328">Glycosyltransferase</keyword>
<keyword id="KW-0460">Magnesium</keyword>
<keyword id="KW-0665">Pyrimidine biosynthesis</keyword>
<keyword id="KW-1185">Reference proteome</keyword>
<keyword id="KW-0808">Transferase</keyword>
<evidence type="ECO:0000255" key="1">
    <source>
        <dbReference type="HAMAP-Rule" id="MF_01208"/>
    </source>
</evidence>
<protein>
    <recommendedName>
        <fullName evidence="1">Orotate phosphoribosyltransferase</fullName>
        <shortName evidence="1">OPRT</shortName>
        <shortName evidence="1">OPRTase</shortName>
        <ecNumber evidence="1">2.4.2.10</ecNumber>
    </recommendedName>
</protein>
<sequence>MLEDEILSEFRASQALLEGHFLLSSGRHSAHYLQCARVLMDPMRASRLAAATAAKIPRDLRHQIQKVVSPAMGGVIIGHEMGRALGVEAMFVERPTGTFELRRGFALNPGEKVLMVEDVVTTGLSSREAIKAIEQAGGEVIAAAALVDRSAGAVDLGVPFFPLVALNFPTYAPDELPPELAATEAVKPGSRAKP</sequence>
<organism>
    <name type="scientific">Novosphingobium aromaticivorans (strain ATCC 700278 / DSM 12444 / CCUG 56034 / CIP 105152 / NBRC 16084 / F199)</name>
    <dbReference type="NCBI Taxonomy" id="279238"/>
    <lineage>
        <taxon>Bacteria</taxon>
        <taxon>Pseudomonadati</taxon>
        <taxon>Pseudomonadota</taxon>
        <taxon>Alphaproteobacteria</taxon>
        <taxon>Sphingomonadales</taxon>
        <taxon>Sphingomonadaceae</taxon>
        <taxon>Novosphingobium</taxon>
    </lineage>
</organism>
<feature type="chain" id="PRO_1000066264" description="Orotate phosphoribosyltransferase">
    <location>
        <begin position="1"/>
        <end position="194"/>
    </location>
</feature>
<feature type="binding site" evidence="1">
    <location>
        <begin position="117"/>
        <end position="125"/>
    </location>
    <ligand>
        <name>5-phospho-alpha-D-ribose 1-diphosphate</name>
        <dbReference type="ChEBI" id="CHEBI:58017"/>
    </ligand>
</feature>
<feature type="binding site" evidence="1">
    <location>
        <position position="121"/>
    </location>
    <ligand>
        <name>orotate</name>
        <dbReference type="ChEBI" id="CHEBI:30839"/>
    </ligand>
</feature>
<feature type="binding site" evidence="1">
    <location>
        <position position="149"/>
    </location>
    <ligand>
        <name>orotate</name>
        <dbReference type="ChEBI" id="CHEBI:30839"/>
    </ligand>
</feature>
<name>PYRE_NOVAD</name>
<accession>Q2G9W6</accession>
<reference key="1">
    <citation type="submission" date="2006-01" db="EMBL/GenBank/DDBJ databases">
        <title>Complete sequence of Novosphingobium aromaticivorans DSM 12444.</title>
        <authorList>
            <consortium name="US DOE Joint Genome Institute"/>
            <person name="Copeland A."/>
            <person name="Lucas S."/>
            <person name="Lapidus A."/>
            <person name="Barry K."/>
            <person name="Detter J.C."/>
            <person name="Glavina T."/>
            <person name="Hammon N."/>
            <person name="Israni S."/>
            <person name="Pitluck S."/>
            <person name="Chain P."/>
            <person name="Malfatti S."/>
            <person name="Shin M."/>
            <person name="Vergez L."/>
            <person name="Schmutz J."/>
            <person name="Larimer F."/>
            <person name="Land M."/>
            <person name="Kyrpides N."/>
            <person name="Ivanova N."/>
            <person name="Fredrickson J."/>
            <person name="Balkwill D."/>
            <person name="Romine M.F."/>
            <person name="Richardson P."/>
        </authorList>
    </citation>
    <scope>NUCLEOTIDE SEQUENCE [LARGE SCALE GENOMIC DNA]</scope>
    <source>
        <strain>ATCC 700278 / DSM 12444 / CCUG 56034 / CIP 105152 / NBRC 16084 / F199</strain>
    </source>
</reference>
<comment type="function">
    <text evidence="1">Catalyzes the transfer of a ribosyl phosphate group from 5-phosphoribose 1-diphosphate to orotate, leading to the formation of orotidine monophosphate (OMP).</text>
</comment>
<comment type="catalytic activity">
    <reaction evidence="1">
        <text>orotidine 5'-phosphate + diphosphate = orotate + 5-phospho-alpha-D-ribose 1-diphosphate</text>
        <dbReference type="Rhea" id="RHEA:10380"/>
        <dbReference type="ChEBI" id="CHEBI:30839"/>
        <dbReference type="ChEBI" id="CHEBI:33019"/>
        <dbReference type="ChEBI" id="CHEBI:57538"/>
        <dbReference type="ChEBI" id="CHEBI:58017"/>
        <dbReference type="EC" id="2.4.2.10"/>
    </reaction>
</comment>
<comment type="cofactor">
    <cofactor evidence="1">
        <name>Mg(2+)</name>
        <dbReference type="ChEBI" id="CHEBI:18420"/>
    </cofactor>
</comment>
<comment type="pathway">
    <text evidence="1">Pyrimidine metabolism; UMP biosynthesis via de novo pathway; UMP from orotate: step 1/2.</text>
</comment>
<comment type="subunit">
    <text evidence="1">Homodimer.</text>
</comment>
<comment type="similarity">
    <text evidence="1">Belongs to the purine/pyrimidine phosphoribosyltransferase family. PyrE subfamily.</text>
</comment>
<gene>
    <name evidence="1" type="primary">pyrE</name>
    <name type="ordered locus">Saro_0912</name>
</gene>
<proteinExistence type="inferred from homology"/>